<name>TRPF_LISIN</name>
<sequence>MIVKICGLKKSVDVKAAVENGADMIGFVFAKSKRQVTIEQAHQLAKNIPPNIKKVGVFVNPTEDELTAAIKGVPLDIVQLHGQEPTEQADRTDAEVIKAFPVKEGKLPNNINDYSNAYILLDAPAEEYEGGSGKTFDWDKVNSDLLIKNKLIIAGGLNVENVKEAINRFEPYAVDISSGVETNGEKDPEKIKIFIKTAKGVGK</sequence>
<evidence type="ECO:0000255" key="1">
    <source>
        <dbReference type="HAMAP-Rule" id="MF_00135"/>
    </source>
</evidence>
<gene>
    <name evidence="1" type="primary">trpF</name>
    <name type="ordered locus">lin1670</name>
</gene>
<accession>Q92B80</accession>
<protein>
    <recommendedName>
        <fullName evidence="1">N-(5'-phosphoribosyl)anthranilate isomerase</fullName>
        <shortName evidence="1">PRAI</shortName>
        <ecNumber evidence="1">5.3.1.24</ecNumber>
    </recommendedName>
</protein>
<dbReference type="EC" id="5.3.1.24" evidence="1"/>
<dbReference type="EMBL" id="AL596169">
    <property type="protein sequence ID" value="CAC96901.1"/>
    <property type="molecule type" value="Genomic_DNA"/>
</dbReference>
<dbReference type="PIR" id="AE1641">
    <property type="entry name" value="AE1641"/>
</dbReference>
<dbReference type="RefSeq" id="WP_010991635.1">
    <property type="nucleotide sequence ID" value="NC_003212.1"/>
</dbReference>
<dbReference type="SMR" id="Q92B80"/>
<dbReference type="STRING" id="272626.gene:17566001"/>
<dbReference type="GeneID" id="93235052"/>
<dbReference type="KEGG" id="lin:trpF"/>
<dbReference type="eggNOG" id="COG0135">
    <property type="taxonomic scope" value="Bacteria"/>
</dbReference>
<dbReference type="HOGENOM" id="CLU_076364_1_0_9"/>
<dbReference type="OrthoDB" id="9786954at2"/>
<dbReference type="UniPathway" id="UPA00035">
    <property type="reaction ID" value="UER00042"/>
</dbReference>
<dbReference type="Proteomes" id="UP000002513">
    <property type="component" value="Chromosome"/>
</dbReference>
<dbReference type="GO" id="GO:0004640">
    <property type="term" value="F:phosphoribosylanthranilate isomerase activity"/>
    <property type="evidence" value="ECO:0007669"/>
    <property type="project" value="UniProtKB-UniRule"/>
</dbReference>
<dbReference type="GO" id="GO:0000162">
    <property type="term" value="P:L-tryptophan biosynthetic process"/>
    <property type="evidence" value="ECO:0007669"/>
    <property type="project" value="UniProtKB-UniRule"/>
</dbReference>
<dbReference type="CDD" id="cd00405">
    <property type="entry name" value="PRAI"/>
    <property type="match status" value="1"/>
</dbReference>
<dbReference type="FunFam" id="3.20.20.70:FF:000075">
    <property type="entry name" value="Tryptophan biosynthesis protein TRP1"/>
    <property type="match status" value="1"/>
</dbReference>
<dbReference type="Gene3D" id="3.20.20.70">
    <property type="entry name" value="Aldolase class I"/>
    <property type="match status" value="1"/>
</dbReference>
<dbReference type="HAMAP" id="MF_00135">
    <property type="entry name" value="PRAI"/>
    <property type="match status" value="1"/>
</dbReference>
<dbReference type="InterPro" id="IPR013785">
    <property type="entry name" value="Aldolase_TIM"/>
</dbReference>
<dbReference type="InterPro" id="IPR001240">
    <property type="entry name" value="PRAI_dom"/>
</dbReference>
<dbReference type="InterPro" id="IPR011060">
    <property type="entry name" value="RibuloseP-bd_barrel"/>
</dbReference>
<dbReference type="InterPro" id="IPR044643">
    <property type="entry name" value="TrpF_fam"/>
</dbReference>
<dbReference type="NCBIfam" id="NF002300">
    <property type="entry name" value="PRK01222.1-7"/>
    <property type="match status" value="1"/>
</dbReference>
<dbReference type="PANTHER" id="PTHR42894">
    <property type="entry name" value="N-(5'-PHOSPHORIBOSYL)ANTHRANILATE ISOMERASE"/>
    <property type="match status" value="1"/>
</dbReference>
<dbReference type="PANTHER" id="PTHR42894:SF1">
    <property type="entry name" value="N-(5'-PHOSPHORIBOSYL)ANTHRANILATE ISOMERASE"/>
    <property type="match status" value="1"/>
</dbReference>
<dbReference type="Pfam" id="PF00697">
    <property type="entry name" value="PRAI"/>
    <property type="match status" value="1"/>
</dbReference>
<dbReference type="SUPFAM" id="SSF51366">
    <property type="entry name" value="Ribulose-phoshate binding barrel"/>
    <property type="match status" value="1"/>
</dbReference>
<feature type="chain" id="PRO_0000154363" description="N-(5'-phosphoribosyl)anthranilate isomerase">
    <location>
        <begin position="1"/>
        <end position="203"/>
    </location>
</feature>
<proteinExistence type="inferred from homology"/>
<reference key="1">
    <citation type="journal article" date="2001" name="Science">
        <title>Comparative genomics of Listeria species.</title>
        <authorList>
            <person name="Glaser P."/>
            <person name="Frangeul L."/>
            <person name="Buchrieser C."/>
            <person name="Rusniok C."/>
            <person name="Amend A."/>
            <person name="Baquero F."/>
            <person name="Berche P."/>
            <person name="Bloecker H."/>
            <person name="Brandt P."/>
            <person name="Chakraborty T."/>
            <person name="Charbit A."/>
            <person name="Chetouani F."/>
            <person name="Couve E."/>
            <person name="de Daruvar A."/>
            <person name="Dehoux P."/>
            <person name="Domann E."/>
            <person name="Dominguez-Bernal G."/>
            <person name="Duchaud E."/>
            <person name="Durant L."/>
            <person name="Dussurget O."/>
            <person name="Entian K.-D."/>
            <person name="Fsihi H."/>
            <person name="Garcia-del Portillo F."/>
            <person name="Garrido P."/>
            <person name="Gautier L."/>
            <person name="Goebel W."/>
            <person name="Gomez-Lopez N."/>
            <person name="Hain T."/>
            <person name="Hauf J."/>
            <person name="Jackson D."/>
            <person name="Jones L.-M."/>
            <person name="Kaerst U."/>
            <person name="Kreft J."/>
            <person name="Kuhn M."/>
            <person name="Kunst F."/>
            <person name="Kurapkat G."/>
            <person name="Madueno E."/>
            <person name="Maitournam A."/>
            <person name="Mata Vicente J."/>
            <person name="Ng E."/>
            <person name="Nedjari H."/>
            <person name="Nordsiek G."/>
            <person name="Novella S."/>
            <person name="de Pablos B."/>
            <person name="Perez-Diaz J.-C."/>
            <person name="Purcell R."/>
            <person name="Remmel B."/>
            <person name="Rose M."/>
            <person name="Schlueter T."/>
            <person name="Simoes N."/>
            <person name="Tierrez A."/>
            <person name="Vazquez-Boland J.-A."/>
            <person name="Voss H."/>
            <person name="Wehland J."/>
            <person name="Cossart P."/>
        </authorList>
    </citation>
    <scope>NUCLEOTIDE SEQUENCE [LARGE SCALE GENOMIC DNA]</scope>
    <source>
        <strain>ATCC BAA-680 / CLIP 11262</strain>
    </source>
</reference>
<keyword id="KW-0028">Amino-acid biosynthesis</keyword>
<keyword id="KW-0057">Aromatic amino acid biosynthesis</keyword>
<keyword id="KW-0413">Isomerase</keyword>
<keyword id="KW-0822">Tryptophan biosynthesis</keyword>
<organism>
    <name type="scientific">Listeria innocua serovar 6a (strain ATCC BAA-680 / CLIP 11262)</name>
    <dbReference type="NCBI Taxonomy" id="272626"/>
    <lineage>
        <taxon>Bacteria</taxon>
        <taxon>Bacillati</taxon>
        <taxon>Bacillota</taxon>
        <taxon>Bacilli</taxon>
        <taxon>Bacillales</taxon>
        <taxon>Listeriaceae</taxon>
        <taxon>Listeria</taxon>
    </lineage>
</organism>
<comment type="catalytic activity">
    <reaction evidence="1">
        <text>N-(5-phospho-beta-D-ribosyl)anthranilate = 1-(2-carboxyphenylamino)-1-deoxy-D-ribulose 5-phosphate</text>
        <dbReference type="Rhea" id="RHEA:21540"/>
        <dbReference type="ChEBI" id="CHEBI:18277"/>
        <dbReference type="ChEBI" id="CHEBI:58613"/>
        <dbReference type="EC" id="5.3.1.24"/>
    </reaction>
</comment>
<comment type="pathway">
    <text evidence="1">Amino-acid biosynthesis; L-tryptophan biosynthesis; L-tryptophan from chorismate: step 3/5.</text>
</comment>
<comment type="similarity">
    <text evidence="1">Belongs to the TrpF family.</text>
</comment>